<feature type="chain" id="PRO_0000152342" description="Imidazole glycerol phosphate synthase subunit HisH">
    <location>
        <begin position="1"/>
        <end position="209"/>
    </location>
</feature>
<feature type="domain" description="Glutamine amidotransferase type-1" evidence="1">
    <location>
        <begin position="1"/>
        <end position="205"/>
    </location>
</feature>
<feature type="active site" description="Nucleophile" evidence="1">
    <location>
        <position position="79"/>
    </location>
</feature>
<feature type="active site" evidence="1">
    <location>
        <position position="180"/>
    </location>
</feature>
<feature type="active site" evidence="1">
    <location>
        <position position="182"/>
    </location>
</feature>
<dbReference type="EC" id="4.3.2.10" evidence="1"/>
<dbReference type="EC" id="3.5.1.2" evidence="1"/>
<dbReference type="EMBL" id="AE017355">
    <property type="protein sequence ID" value="AAT59420.1"/>
    <property type="molecule type" value="Genomic_DNA"/>
</dbReference>
<dbReference type="RefSeq" id="WP_000560341.1">
    <property type="nucleotide sequence ID" value="NC_005957.1"/>
</dbReference>
<dbReference type="RefSeq" id="YP_035626.1">
    <property type="nucleotide sequence ID" value="NC_005957.1"/>
</dbReference>
<dbReference type="SMR" id="Q6HLE5"/>
<dbReference type="KEGG" id="btk:BT9727_1292"/>
<dbReference type="PATRIC" id="fig|281309.8.peg.1361"/>
<dbReference type="HOGENOM" id="CLU_071837_2_2_9"/>
<dbReference type="UniPathway" id="UPA00031">
    <property type="reaction ID" value="UER00010"/>
</dbReference>
<dbReference type="Proteomes" id="UP000001301">
    <property type="component" value="Chromosome"/>
</dbReference>
<dbReference type="GO" id="GO:0005737">
    <property type="term" value="C:cytoplasm"/>
    <property type="evidence" value="ECO:0007669"/>
    <property type="project" value="UniProtKB-SubCell"/>
</dbReference>
<dbReference type="GO" id="GO:0004359">
    <property type="term" value="F:glutaminase activity"/>
    <property type="evidence" value="ECO:0007669"/>
    <property type="project" value="UniProtKB-EC"/>
</dbReference>
<dbReference type="GO" id="GO:0000107">
    <property type="term" value="F:imidazoleglycerol-phosphate synthase activity"/>
    <property type="evidence" value="ECO:0007669"/>
    <property type="project" value="UniProtKB-UniRule"/>
</dbReference>
<dbReference type="GO" id="GO:0016829">
    <property type="term" value="F:lyase activity"/>
    <property type="evidence" value="ECO:0007669"/>
    <property type="project" value="UniProtKB-KW"/>
</dbReference>
<dbReference type="GO" id="GO:0000105">
    <property type="term" value="P:L-histidine biosynthetic process"/>
    <property type="evidence" value="ECO:0007669"/>
    <property type="project" value="UniProtKB-UniRule"/>
</dbReference>
<dbReference type="CDD" id="cd01748">
    <property type="entry name" value="GATase1_IGP_Synthase"/>
    <property type="match status" value="1"/>
</dbReference>
<dbReference type="FunFam" id="3.40.50.880:FF:000028">
    <property type="entry name" value="Imidazole glycerol phosphate synthase subunit HisH"/>
    <property type="match status" value="1"/>
</dbReference>
<dbReference type="Gene3D" id="3.40.50.880">
    <property type="match status" value="1"/>
</dbReference>
<dbReference type="HAMAP" id="MF_00278">
    <property type="entry name" value="HisH"/>
    <property type="match status" value="1"/>
</dbReference>
<dbReference type="InterPro" id="IPR029062">
    <property type="entry name" value="Class_I_gatase-like"/>
</dbReference>
<dbReference type="InterPro" id="IPR017926">
    <property type="entry name" value="GATASE"/>
</dbReference>
<dbReference type="InterPro" id="IPR010139">
    <property type="entry name" value="Imidazole-glycPsynth_HisH"/>
</dbReference>
<dbReference type="NCBIfam" id="TIGR01855">
    <property type="entry name" value="IMP_synth_hisH"/>
    <property type="match status" value="1"/>
</dbReference>
<dbReference type="PANTHER" id="PTHR42701">
    <property type="entry name" value="IMIDAZOLE GLYCEROL PHOSPHATE SYNTHASE SUBUNIT HISH"/>
    <property type="match status" value="1"/>
</dbReference>
<dbReference type="PANTHER" id="PTHR42701:SF1">
    <property type="entry name" value="IMIDAZOLE GLYCEROL PHOSPHATE SYNTHASE SUBUNIT HISH"/>
    <property type="match status" value="1"/>
</dbReference>
<dbReference type="Pfam" id="PF00117">
    <property type="entry name" value="GATase"/>
    <property type="match status" value="1"/>
</dbReference>
<dbReference type="PIRSF" id="PIRSF000495">
    <property type="entry name" value="Amidotransf_hisH"/>
    <property type="match status" value="1"/>
</dbReference>
<dbReference type="SUPFAM" id="SSF52317">
    <property type="entry name" value="Class I glutamine amidotransferase-like"/>
    <property type="match status" value="1"/>
</dbReference>
<dbReference type="PROSITE" id="PS51273">
    <property type="entry name" value="GATASE_TYPE_1"/>
    <property type="match status" value="1"/>
</dbReference>
<evidence type="ECO:0000255" key="1">
    <source>
        <dbReference type="HAMAP-Rule" id="MF_00278"/>
    </source>
</evidence>
<protein>
    <recommendedName>
        <fullName evidence="1">Imidazole glycerol phosphate synthase subunit HisH</fullName>
        <ecNumber evidence="1">4.3.2.10</ecNumber>
    </recommendedName>
    <alternativeName>
        <fullName evidence="1">IGP synthase glutaminase subunit</fullName>
        <ecNumber evidence="1">3.5.1.2</ecNumber>
    </alternativeName>
    <alternativeName>
        <fullName evidence="1">IGP synthase subunit HisH</fullName>
    </alternativeName>
    <alternativeName>
        <fullName evidence="1">ImGP synthase subunit HisH</fullName>
        <shortName evidence="1">IGPS subunit HisH</shortName>
    </alternativeName>
</protein>
<name>HIS5_BACHK</name>
<comment type="function">
    <text evidence="1">IGPS catalyzes the conversion of PRFAR and glutamine to IGP, AICAR and glutamate. The HisH subunit catalyzes the hydrolysis of glutamine to glutamate and ammonia as part of the synthesis of IGP and AICAR. The resulting ammonia molecule is channeled to the active site of HisF.</text>
</comment>
<comment type="catalytic activity">
    <reaction evidence="1">
        <text>5-[(5-phospho-1-deoxy-D-ribulos-1-ylimino)methylamino]-1-(5-phospho-beta-D-ribosyl)imidazole-4-carboxamide + L-glutamine = D-erythro-1-(imidazol-4-yl)glycerol 3-phosphate + 5-amino-1-(5-phospho-beta-D-ribosyl)imidazole-4-carboxamide + L-glutamate + H(+)</text>
        <dbReference type="Rhea" id="RHEA:24793"/>
        <dbReference type="ChEBI" id="CHEBI:15378"/>
        <dbReference type="ChEBI" id="CHEBI:29985"/>
        <dbReference type="ChEBI" id="CHEBI:58278"/>
        <dbReference type="ChEBI" id="CHEBI:58359"/>
        <dbReference type="ChEBI" id="CHEBI:58475"/>
        <dbReference type="ChEBI" id="CHEBI:58525"/>
        <dbReference type="EC" id="4.3.2.10"/>
    </reaction>
</comment>
<comment type="catalytic activity">
    <reaction evidence="1">
        <text>L-glutamine + H2O = L-glutamate + NH4(+)</text>
        <dbReference type="Rhea" id="RHEA:15889"/>
        <dbReference type="ChEBI" id="CHEBI:15377"/>
        <dbReference type="ChEBI" id="CHEBI:28938"/>
        <dbReference type="ChEBI" id="CHEBI:29985"/>
        <dbReference type="ChEBI" id="CHEBI:58359"/>
        <dbReference type="EC" id="3.5.1.2"/>
    </reaction>
</comment>
<comment type="pathway">
    <text evidence="1">Amino-acid biosynthesis; L-histidine biosynthesis; L-histidine from 5-phospho-alpha-D-ribose 1-diphosphate: step 5/9.</text>
</comment>
<comment type="subunit">
    <text evidence="1">Heterodimer of HisH and HisF.</text>
</comment>
<comment type="subcellular location">
    <subcellularLocation>
        <location evidence="1">Cytoplasm</location>
    </subcellularLocation>
</comment>
<gene>
    <name evidence="1" type="primary">hisH</name>
    <name type="ordered locus">BT9727_1292</name>
</gene>
<accession>Q6HLE5</accession>
<proteinExistence type="inferred from homology"/>
<sequence length="209" mass="23263">MIAIIDYGMGNIRSVEQALKYIGAAYIVTSDKEEIFRSDGVILPGVGAFPKAMDILEEKDLVRVLQEIGCSRKPLLGICLGMQLLFEKSEELQDCNGLSLLPGVIRKLKVPYKIPHMGWNELKKEGEIALWNGVEDSSFVYYVHSYYADCPNEIVYGISDYGVKVPGFVAKGNIYGAQFHPEKSGDIGMQMLKNFKGVVETWKSSQLSI</sequence>
<organism>
    <name type="scientific">Bacillus thuringiensis subsp. konkukian (strain 97-27)</name>
    <dbReference type="NCBI Taxonomy" id="281309"/>
    <lineage>
        <taxon>Bacteria</taxon>
        <taxon>Bacillati</taxon>
        <taxon>Bacillota</taxon>
        <taxon>Bacilli</taxon>
        <taxon>Bacillales</taxon>
        <taxon>Bacillaceae</taxon>
        <taxon>Bacillus</taxon>
        <taxon>Bacillus cereus group</taxon>
    </lineage>
</organism>
<keyword id="KW-0028">Amino-acid biosynthesis</keyword>
<keyword id="KW-0963">Cytoplasm</keyword>
<keyword id="KW-0315">Glutamine amidotransferase</keyword>
<keyword id="KW-0368">Histidine biosynthesis</keyword>
<keyword id="KW-0378">Hydrolase</keyword>
<keyword id="KW-0456">Lyase</keyword>
<reference key="1">
    <citation type="journal article" date="2006" name="J. Bacteriol.">
        <title>Pathogenomic sequence analysis of Bacillus cereus and Bacillus thuringiensis isolates closely related to Bacillus anthracis.</title>
        <authorList>
            <person name="Han C.S."/>
            <person name="Xie G."/>
            <person name="Challacombe J.F."/>
            <person name="Altherr M.R."/>
            <person name="Bhotika S.S."/>
            <person name="Bruce D."/>
            <person name="Campbell C.S."/>
            <person name="Campbell M.L."/>
            <person name="Chen J."/>
            <person name="Chertkov O."/>
            <person name="Cleland C."/>
            <person name="Dimitrijevic M."/>
            <person name="Doggett N.A."/>
            <person name="Fawcett J.J."/>
            <person name="Glavina T."/>
            <person name="Goodwin L.A."/>
            <person name="Hill K.K."/>
            <person name="Hitchcock P."/>
            <person name="Jackson P.J."/>
            <person name="Keim P."/>
            <person name="Kewalramani A.R."/>
            <person name="Longmire J."/>
            <person name="Lucas S."/>
            <person name="Malfatti S."/>
            <person name="McMurry K."/>
            <person name="Meincke L.J."/>
            <person name="Misra M."/>
            <person name="Moseman B.L."/>
            <person name="Mundt M."/>
            <person name="Munk A.C."/>
            <person name="Okinaka R.T."/>
            <person name="Parson-Quintana B."/>
            <person name="Reilly L.P."/>
            <person name="Richardson P."/>
            <person name="Robinson D.L."/>
            <person name="Rubin E."/>
            <person name="Saunders E."/>
            <person name="Tapia R."/>
            <person name="Tesmer J.G."/>
            <person name="Thayer N."/>
            <person name="Thompson L.S."/>
            <person name="Tice H."/>
            <person name="Ticknor L.O."/>
            <person name="Wills P.L."/>
            <person name="Brettin T.S."/>
            <person name="Gilna P."/>
        </authorList>
    </citation>
    <scope>NUCLEOTIDE SEQUENCE [LARGE SCALE GENOMIC DNA]</scope>
    <source>
        <strain>97-27</strain>
    </source>
</reference>